<feature type="chain" id="PRO_0000180620" description="Glucose-6-phosphate isomerase">
    <location>
        <begin position="1"/>
        <end position="525"/>
    </location>
</feature>
<feature type="active site" description="Proton donor" evidence="1">
    <location>
        <position position="347"/>
    </location>
</feature>
<feature type="active site" evidence="1">
    <location>
        <position position="378"/>
    </location>
</feature>
<feature type="active site" evidence="1">
    <location>
        <position position="493"/>
    </location>
</feature>
<protein>
    <recommendedName>
        <fullName evidence="1">Glucose-6-phosphate isomerase</fullName>
        <shortName evidence="1">GPI</shortName>
        <ecNumber evidence="1">5.3.1.9</ecNumber>
    </recommendedName>
    <alternativeName>
        <fullName evidence="1">Phosphoglucose isomerase</fullName>
        <shortName evidence="1">PGI</shortName>
    </alternativeName>
    <alternativeName>
        <fullName evidence="1">Phosphohexose isomerase</fullName>
        <shortName evidence="1">PHI</shortName>
    </alternativeName>
</protein>
<accession>P0CD72</accession>
<accession>O84382</accession>
<accession>Q46402</accession>
<evidence type="ECO:0000255" key="1">
    <source>
        <dbReference type="HAMAP-Rule" id="MF_00473"/>
    </source>
</evidence>
<evidence type="ECO:0000305" key="2"/>
<proteinExistence type="inferred from homology"/>
<keyword id="KW-0963">Cytoplasm</keyword>
<keyword id="KW-0312">Gluconeogenesis</keyword>
<keyword id="KW-0324">Glycolysis</keyword>
<keyword id="KW-0413">Isomerase</keyword>
<keyword id="KW-1185">Reference proteome</keyword>
<comment type="function">
    <text evidence="1">Catalyzes the reversible isomerization of glucose-6-phosphate to fructose-6-phosphate.</text>
</comment>
<comment type="catalytic activity">
    <reaction evidence="1">
        <text>alpha-D-glucose 6-phosphate = beta-D-fructose 6-phosphate</text>
        <dbReference type="Rhea" id="RHEA:11816"/>
        <dbReference type="ChEBI" id="CHEBI:57634"/>
        <dbReference type="ChEBI" id="CHEBI:58225"/>
        <dbReference type="EC" id="5.3.1.9"/>
    </reaction>
</comment>
<comment type="pathway">
    <text evidence="1">Carbohydrate biosynthesis; gluconeogenesis.</text>
</comment>
<comment type="pathway">
    <text evidence="1">Carbohydrate degradation; glycolysis; D-glyceraldehyde 3-phosphate and glycerone phosphate from D-glucose: step 2/4.</text>
</comment>
<comment type="subcellular location">
    <subcellularLocation>
        <location evidence="1">Cytoplasm</location>
    </subcellularLocation>
</comment>
<comment type="similarity">
    <text evidence="1 2">Belongs to the GPI family.</text>
</comment>
<reference key="1">
    <citation type="journal article" date="1998" name="Science">
        <title>Genome sequence of an obligate intracellular pathogen of humans: Chlamydia trachomatis.</title>
        <authorList>
            <person name="Stephens R.S."/>
            <person name="Kalman S."/>
            <person name="Lammel C.J."/>
            <person name="Fan J."/>
            <person name="Marathe R."/>
            <person name="Aravind L."/>
            <person name="Mitchell W.P."/>
            <person name="Olinger L."/>
            <person name="Tatusov R.L."/>
            <person name="Zhao Q."/>
            <person name="Koonin E.V."/>
            <person name="Davis R.W."/>
        </authorList>
    </citation>
    <scope>NUCLEOTIDE SEQUENCE [LARGE SCALE GENOMIC DNA]</scope>
    <source>
        <strain>ATCC VR-885 / DSM 19411 / UW-3/Cx</strain>
    </source>
</reference>
<sequence>MMGKGFLDCESLVALQEMALHPIDLTASGCLSEERIQKNSLSAEGFTYSYATERVDDRCLEALQGLTEERELIKQMECMQQGAIMNRIEGFQSESRPVLHTATRAWVRDQDLHEEAAAIARHSKEEALRLAEFLYIARAKFSTLVQMGIGGSELGPKAMYFAMQGSCPSDKRIFFVSNIDPDNAAEVLREIDLEQTLVVVVSKSGTTLEPAANEELFRQAYQNKGLSIAEHFVAVTSQGSPMDDKSRYLEVFHLWDSIGGRFSATSMVGGVVLGFAFGYEAFIEFLQGAAAIDAHALTPKMRENLPLLSAMLGVWNRNLLGYPTTAVIPYSTGLKYFTAHLQQCGMESNGKSISREGKEISFRTSPIIWGDVGTNCQHSFFQSLHQGTDIVPVEFIGFLHNQRGLDCVLSGSSSSQKLFANLVAQSLALAQGRDNANSNKRFKGNRPSSILVAQQLSPRIAGSLLAFYEHKFAFQGFCWGINSFDQEGVSLGKELATQIIGIMSGNAPVEFSEARGMLRLFNVLT</sequence>
<organism>
    <name type="scientific">Chlamydia trachomatis serovar D (strain ATCC VR-885 / DSM 19411 / UW-3/Cx)</name>
    <dbReference type="NCBI Taxonomy" id="272561"/>
    <lineage>
        <taxon>Bacteria</taxon>
        <taxon>Pseudomonadati</taxon>
        <taxon>Chlamydiota</taxon>
        <taxon>Chlamydiia</taxon>
        <taxon>Chlamydiales</taxon>
        <taxon>Chlamydiaceae</taxon>
        <taxon>Chlamydia/Chlamydophila group</taxon>
        <taxon>Chlamydia</taxon>
    </lineage>
</organism>
<name>G6PI_CHLTR</name>
<gene>
    <name evidence="1" type="primary">pgi</name>
    <name type="ordered locus">CT_378</name>
</gene>
<dbReference type="EC" id="5.3.1.9" evidence="1"/>
<dbReference type="EMBL" id="AE001273">
    <property type="protein sequence ID" value="AAC67974.1"/>
    <property type="molecule type" value="Genomic_DNA"/>
</dbReference>
<dbReference type="PIR" id="F71521">
    <property type="entry name" value="F71521"/>
</dbReference>
<dbReference type="RefSeq" id="NP_219887.1">
    <property type="nucleotide sequence ID" value="NC_000117.1"/>
</dbReference>
<dbReference type="RefSeq" id="WP_009871730.1">
    <property type="nucleotide sequence ID" value="NC_000117.1"/>
</dbReference>
<dbReference type="SMR" id="P0CD72"/>
<dbReference type="FunCoup" id="P0CD72">
    <property type="interactions" value="225"/>
</dbReference>
<dbReference type="STRING" id="272561.CT_378"/>
<dbReference type="EnsemblBacteria" id="AAC67974">
    <property type="protein sequence ID" value="AAC67974"/>
    <property type="gene ID" value="CT_378"/>
</dbReference>
<dbReference type="GeneID" id="884740"/>
<dbReference type="KEGG" id="ctr:CT_378"/>
<dbReference type="PATRIC" id="fig|272561.5.peg.407"/>
<dbReference type="HOGENOM" id="CLU_017947_3_1_0"/>
<dbReference type="InParanoid" id="P0CD72"/>
<dbReference type="OrthoDB" id="140919at2"/>
<dbReference type="UniPathway" id="UPA00109">
    <property type="reaction ID" value="UER00181"/>
</dbReference>
<dbReference type="UniPathway" id="UPA00138"/>
<dbReference type="Proteomes" id="UP000000431">
    <property type="component" value="Chromosome"/>
</dbReference>
<dbReference type="GO" id="GO:0005829">
    <property type="term" value="C:cytosol"/>
    <property type="evidence" value="ECO:0000318"/>
    <property type="project" value="GO_Central"/>
</dbReference>
<dbReference type="GO" id="GO:0097367">
    <property type="term" value="F:carbohydrate derivative binding"/>
    <property type="evidence" value="ECO:0007669"/>
    <property type="project" value="InterPro"/>
</dbReference>
<dbReference type="GO" id="GO:0004347">
    <property type="term" value="F:glucose-6-phosphate isomerase activity"/>
    <property type="evidence" value="ECO:0000318"/>
    <property type="project" value="GO_Central"/>
</dbReference>
<dbReference type="GO" id="GO:0048029">
    <property type="term" value="F:monosaccharide binding"/>
    <property type="evidence" value="ECO:0000318"/>
    <property type="project" value="GO_Central"/>
</dbReference>
<dbReference type="GO" id="GO:0006094">
    <property type="term" value="P:gluconeogenesis"/>
    <property type="evidence" value="ECO:0000318"/>
    <property type="project" value="GO_Central"/>
</dbReference>
<dbReference type="GO" id="GO:0051156">
    <property type="term" value="P:glucose 6-phosphate metabolic process"/>
    <property type="evidence" value="ECO:0000318"/>
    <property type="project" value="GO_Central"/>
</dbReference>
<dbReference type="GO" id="GO:0006096">
    <property type="term" value="P:glycolytic process"/>
    <property type="evidence" value="ECO:0000318"/>
    <property type="project" value="GO_Central"/>
</dbReference>
<dbReference type="CDD" id="cd05015">
    <property type="entry name" value="SIS_PGI_1"/>
    <property type="match status" value="1"/>
</dbReference>
<dbReference type="CDD" id="cd05016">
    <property type="entry name" value="SIS_PGI_2"/>
    <property type="match status" value="1"/>
</dbReference>
<dbReference type="Gene3D" id="1.10.1390.10">
    <property type="match status" value="1"/>
</dbReference>
<dbReference type="Gene3D" id="3.40.50.10490">
    <property type="entry name" value="Glucose-6-phosphate isomerase like protein, domain 1"/>
    <property type="match status" value="2"/>
</dbReference>
<dbReference type="HAMAP" id="MF_00473">
    <property type="entry name" value="G6P_isomerase"/>
    <property type="match status" value="1"/>
</dbReference>
<dbReference type="InterPro" id="IPR001672">
    <property type="entry name" value="G6P_Isomerase"/>
</dbReference>
<dbReference type="InterPro" id="IPR023096">
    <property type="entry name" value="G6P_Isomerase_C"/>
</dbReference>
<dbReference type="InterPro" id="IPR018189">
    <property type="entry name" value="Phosphoglucose_isomerase_CS"/>
</dbReference>
<dbReference type="InterPro" id="IPR046348">
    <property type="entry name" value="SIS_dom_sf"/>
</dbReference>
<dbReference type="InterPro" id="IPR035476">
    <property type="entry name" value="SIS_PGI_1"/>
</dbReference>
<dbReference type="InterPro" id="IPR035482">
    <property type="entry name" value="SIS_PGI_2"/>
</dbReference>
<dbReference type="NCBIfam" id="NF010695">
    <property type="entry name" value="PRK14095.1"/>
    <property type="match status" value="1"/>
</dbReference>
<dbReference type="PANTHER" id="PTHR11469">
    <property type="entry name" value="GLUCOSE-6-PHOSPHATE ISOMERASE"/>
    <property type="match status" value="1"/>
</dbReference>
<dbReference type="PANTHER" id="PTHR11469:SF1">
    <property type="entry name" value="GLUCOSE-6-PHOSPHATE ISOMERASE"/>
    <property type="match status" value="1"/>
</dbReference>
<dbReference type="Pfam" id="PF00342">
    <property type="entry name" value="PGI"/>
    <property type="match status" value="1"/>
</dbReference>
<dbReference type="PRINTS" id="PR00662">
    <property type="entry name" value="G6PISOMERASE"/>
</dbReference>
<dbReference type="SUPFAM" id="SSF53697">
    <property type="entry name" value="SIS domain"/>
    <property type="match status" value="1"/>
</dbReference>
<dbReference type="PROSITE" id="PS00765">
    <property type="entry name" value="P_GLUCOSE_ISOMERASE_1"/>
    <property type="match status" value="1"/>
</dbReference>
<dbReference type="PROSITE" id="PS00174">
    <property type="entry name" value="P_GLUCOSE_ISOMERASE_2"/>
    <property type="match status" value="1"/>
</dbReference>
<dbReference type="PROSITE" id="PS51463">
    <property type="entry name" value="P_GLUCOSE_ISOMERASE_3"/>
    <property type="match status" value="1"/>
</dbReference>